<sequence length="134" mass="15072">MIICNDSYPSVLDKIADMLTKAEVELVFVSNEEMREINRDKRGMDKTTDVLSFPLTYVPHFPIGSIVINTDLASSKALELGHSTDDEIALLFTHGLLHILGFDHENDDGEMRRKEISIMEHMGLPKSLIVRNGC</sequence>
<name>YBEY_CAMFF</name>
<feature type="chain" id="PRO_0000284179" description="Endoribonuclease YbeY">
    <location>
        <begin position="1"/>
        <end position="134"/>
    </location>
</feature>
<feature type="binding site" evidence="1">
    <location>
        <position position="94"/>
    </location>
    <ligand>
        <name>Zn(2+)</name>
        <dbReference type="ChEBI" id="CHEBI:29105"/>
        <note>catalytic</note>
    </ligand>
</feature>
<feature type="binding site" evidence="1">
    <location>
        <position position="98"/>
    </location>
    <ligand>
        <name>Zn(2+)</name>
        <dbReference type="ChEBI" id="CHEBI:29105"/>
        <note>catalytic</note>
    </ligand>
</feature>
<feature type="binding site" evidence="1">
    <location>
        <position position="104"/>
    </location>
    <ligand>
        <name>Zn(2+)</name>
        <dbReference type="ChEBI" id="CHEBI:29105"/>
        <note>catalytic</note>
    </ligand>
</feature>
<gene>
    <name evidence="1" type="primary">ybeY</name>
    <name type="ordered locus">CFF8240_0477</name>
</gene>
<protein>
    <recommendedName>
        <fullName evidence="1">Endoribonuclease YbeY</fullName>
        <ecNumber evidence="1">3.1.-.-</ecNumber>
    </recommendedName>
</protein>
<organism>
    <name type="scientific">Campylobacter fetus subsp. fetus (strain 82-40)</name>
    <dbReference type="NCBI Taxonomy" id="360106"/>
    <lineage>
        <taxon>Bacteria</taxon>
        <taxon>Pseudomonadati</taxon>
        <taxon>Campylobacterota</taxon>
        <taxon>Epsilonproteobacteria</taxon>
        <taxon>Campylobacterales</taxon>
        <taxon>Campylobacteraceae</taxon>
        <taxon>Campylobacter</taxon>
    </lineage>
</organism>
<accession>A0RN89</accession>
<dbReference type="EC" id="3.1.-.-" evidence="1"/>
<dbReference type="EMBL" id="CP000487">
    <property type="protein sequence ID" value="ABK83265.1"/>
    <property type="molecule type" value="Genomic_DNA"/>
</dbReference>
<dbReference type="RefSeq" id="WP_002848706.1">
    <property type="nucleotide sequence ID" value="NC_008599.1"/>
</dbReference>
<dbReference type="SMR" id="A0RN89"/>
<dbReference type="GeneID" id="61064321"/>
<dbReference type="KEGG" id="cff:CFF8240_0477"/>
<dbReference type="eggNOG" id="COG0319">
    <property type="taxonomic scope" value="Bacteria"/>
</dbReference>
<dbReference type="HOGENOM" id="CLU_106710_3_0_7"/>
<dbReference type="Proteomes" id="UP000000760">
    <property type="component" value="Chromosome"/>
</dbReference>
<dbReference type="GO" id="GO:0005737">
    <property type="term" value="C:cytoplasm"/>
    <property type="evidence" value="ECO:0007669"/>
    <property type="project" value="UniProtKB-SubCell"/>
</dbReference>
<dbReference type="GO" id="GO:0004222">
    <property type="term" value="F:metalloendopeptidase activity"/>
    <property type="evidence" value="ECO:0007669"/>
    <property type="project" value="InterPro"/>
</dbReference>
<dbReference type="GO" id="GO:0004521">
    <property type="term" value="F:RNA endonuclease activity"/>
    <property type="evidence" value="ECO:0007669"/>
    <property type="project" value="UniProtKB-UniRule"/>
</dbReference>
<dbReference type="GO" id="GO:0008270">
    <property type="term" value="F:zinc ion binding"/>
    <property type="evidence" value="ECO:0007669"/>
    <property type="project" value="UniProtKB-UniRule"/>
</dbReference>
<dbReference type="GO" id="GO:0006364">
    <property type="term" value="P:rRNA processing"/>
    <property type="evidence" value="ECO:0007669"/>
    <property type="project" value="UniProtKB-UniRule"/>
</dbReference>
<dbReference type="Gene3D" id="3.40.390.30">
    <property type="entry name" value="Metalloproteases ('zincins'), catalytic domain"/>
    <property type="match status" value="1"/>
</dbReference>
<dbReference type="HAMAP" id="MF_00009">
    <property type="entry name" value="Endoribonucl_YbeY"/>
    <property type="match status" value="1"/>
</dbReference>
<dbReference type="InterPro" id="IPR023091">
    <property type="entry name" value="MetalPrtase_cat_dom_sf_prd"/>
</dbReference>
<dbReference type="InterPro" id="IPR002036">
    <property type="entry name" value="YbeY"/>
</dbReference>
<dbReference type="InterPro" id="IPR020549">
    <property type="entry name" value="YbeY_CS"/>
</dbReference>
<dbReference type="NCBIfam" id="TIGR00043">
    <property type="entry name" value="rRNA maturation RNase YbeY"/>
    <property type="match status" value="1"/>
</dbReference>
<dbReference type="PANTHER" id="PTHR46986">
    <property type="entry name" value="ENDORIBONUCLEASE YBEY, CHLOROPLASTIC"/>
    <property type="match status" value="1"/>
</dbReference>
<dbReference type="PANTHER" id="PTHR46986:SF1">
    <property type="entry name" value="ENDORIBONUCLEASE YBEY, CHLOROPLASTIC"/>
    <property type="match status" value="1"/>
</dbReference>
<dbReference type="Pfam" id="PF02130">
    <property type="entry name" value="YbeY"/>
    <property type="match status" value="1"/>
</dbReference>
<dbReference type="SUPFAM" id="SSF55486">
    <property type="entry name" value="Metalloproteases ('zincins'), catalytic domain"/>
    <property type="match status" value="1"/>
</dbReference>
<dbReference type="PROSITE" id="PS01306">
    <property type="entry name" value="UPF0054"/>
    <property type="match status" value="1"/>
</dbReference>
<evidence type="ECO:0000255" key="1">
    <source>
        <dbReference type="HAMAP-Rule" id="MF_00009"/>
    </source>
</evidence>
<keyword id="KW-0963">Cytoplasm</keyword>
<keyword id="KW-0255">Endonuclease</keyword>
<keyword id="KW-0378">Hydrolase</keyword>
<keyword id="KW-0479">Metal-binding</keyword>
<keyword id="KW-0540">Nuclease</keyword>
<keyword id="KW-0690">Ribosome biogenesis</keyword>
<keyword id="KW-0698">rRNA processing</keyword>
<keyword id="KW-0862">Zinc</keyword>
<comment type="function">
    <text evidence="1">Single strand-specific metallo-endoribonuclease involved in late-stage 70S ribosome quality control and in maturation of the 3' terminus of the 16S rRNA.</text>
</comment>
<comment type="cofactor">
    <cofactor evidence="1">
        <name>Zn(2+)</name>
        <dbReference type="ChEBI" id="CHEBI:29105"/>
    </cofactor>
    <text evidence="1">Binds 1 zinc ion.</text>
</comment>
<comment type="subcellular location">
    <subcellularLocation>
        <location evidence="1">Cytoplasm</location>
    </subcellularLocation>
</comment>
<comment type="similarity">
    <text evidence="1">Belongs to the endoribonuclease YbeY family.</text>
</comment>
<reference key="1">
    <citation type="submission" date="2006-11" db="EMBL/GenBank/DDBJ databases">
        <title>Sequence of Campylobacter fetus subsp. fetus 82-40.</title>
        <authorList>
            <person name="Fouts D.E."/>
            <person name="Nelson K.E."/>
        </authorList>
    </citation>
    <scope>NUCLEOTIDE SEQUENCE [LARGE SCALE GENOMIC DNA]</scope>
    <source>
        <strain>82-40</strain>
    </source>
</reference>
<proteinExistence type="inferred from homology"/>